<accession>Q0HLG0</accession>
<feature type="chain" id="PRO_1000000206" description="Ribosome-binding factor A">
    <location>
        <begin position="1"/>
        <end position="146"/>
    </location>
</feature>
<feature type="region of interest" description="Disordered" evidence="2">
    <location>
        <begin position="121"/>
        <end position="146"/>
    </location>
</feature>
<feature type="compositionally biased region" description="Acidic residues" evidence="2">
    <location>
        <begin position="130"/>
        <end position="146"/>
    </location>
</feature>
<name>RBFA_SHESM</name>
<evidence type="ECO:0000255" key="1">
    <source>
        <dbReference type="HAMAP-Rule" id="MF_00003"/>
    </source>
</evidence>
<evidence type="ECO:0000256" key="2">
    <source>
        <dbReference type="SAM" id="MobiDB-lite"/>
    </source>
</evidence>
<reference key="1">
    <citation type="submission" date="2006-08" db="EMBL/GenBank/DDBJ databases">
        <title>Complete sequence of Shewanella sp. MR-4.</title>
        <authorList>
            <consortium name="US DOE Joint Genome Institute"/>
            <person name="Copeland A."/>
            <person name="Lucas S."/>
            <person name="Lapidus A."/>
            <person name="Barry K."/>
            <person name="Detter J.C."/>
            <person name="Glavina del Rio T."/>
            <person name="Hammon N."/>
            <person name="Israni S."/>
            <person name="Dalin E."/>
            <person name="Tice H."/>
            <person name="Pitluck S."/>
            <person name="Kiss H."/>
            <person name="Brettin T."/>
            <person name="Bruce D."/>
            <person name="Han C."/>
            <person name="Tapia R."/>
            <person name="Gilna P."/>
            <person name="Schmutz J."/>
            <person name="Larimer F."/>
            <person name="Land M."/>
            <person name="Hauser L."/>
            <person name="Kyrpides N."/>
            <person name="Mikhailova N."/>
            <person name="Nealson K."/>
            <person name="Konstantinidis K."/>
            <person name="Klappenbach J."/>
            <person name="Tiedje J."/>
            <person name="Richardson P."/>
        </authorList>
    </citation>
    <scope>NUCLEOTIDE SEQUENCE [LARGE SCALE GENOMIC DNA]</scope>
    <source>
        <strain>MR-4</strain>
    </source>
</reference>
<dbReference type="EMBL" id="CP000446">
    <property type="protein sequence ID" value="ABI38107.1"/>
    <property type="molecule type" value="Genomic_DNA"/>
</dbReference>
<dbReference type="RefSeq" id="WP_011621818.1">
    <property type="nucleotide sequence ID" value="NC_008321.1"/>
</dbReference>
<dbReference type="SMR" id="Q0HLG0"/>
<dbReference type="KEGG" id="she:Shewmr4_1027"/>
<dbReference type="HOGENOM" id="CLU_089475_5_0_6"/>
<dbReference type="GO" id="GO:0005829">
    <property type="term" value="C:cytosol"/>
    <property type="evidence" value="ECO:0007669"/>
    <property type="project" value="TreeGrafter"/>
</dbReference>
<dbReference type="GO" id="GO:0043024">
    <property type="term" value="F:ribosomal small subunit binding"/>
    <property type="evidence" value="ECO:0007669"/>
    <property type="project" value="TreeGrafter"/>
</dbReference>
<dbReference type="GO" id="GO:0030490">
    <property type="term" value="P:maturation of SSU-rRNA"/>
    <property type="evidence" value="ECO:0007669"/>
    <property type="project" value="UniProtKB-UniRule"/>
</dbReference>
<dbReference type="FunFam" id="3.30.300.20:FF:000007">
    <property type="entry name" value="Ribosome-binding factor A"/>
    <property type="match status" value="1"/>
</dbReference>
<dbReference type="Gene3D" id="3.30.300.20">
    <property type="match status" value="1"/>
</dbReference>
<dbReference type="HAMAP" id="MF_00003">
    <property type="entry name" value="RbfA"/>
    <property type="match status" value="1"/>
</dbReference>
<dbReference type="InterPro" id="IPR015946">
    <property type="entry name" value="KH_dom-like_a/b"/>
</dbReference>
<dbReference type="InterPro" id="IPR000238">
    <property type="entry name" value="RbfA"/>
</dbReference>
<dbReference type="InterPro" id="IPR023799">
    <property type="entry name" value="RbfA_dom_sf"/>
</dbReference>
<dbReference type="InterPro" id="IPR020053">
    <property type="entry name" value="Ribosome-bd_factorA_CS"/>
</dbReference>
<dbReference type="NCBIfam" id="TIGR00082">
    <property type="entry name" value="rbfA"/>
    <property type="match status" value="1"/>
</dbReference>
<dbReference type="PANTHER" id="PTHR33515">
    <property type="entry name" value="RIBOSOME-BINDING FACTOR A, CHLOROPLASTIC-RELATED"/>
    <property type="match status" value="1"/>
</dbReference>
<dbReference type="PANTHER" id="PTHR33515:SF1">
    <property type="entry name" value="RIBOSOME-BINDING FACTOR A, CHLOROPLASTIC-RELATED"/>
    <property type="match status" value="1"/>
</dbReference>
<dbReference type="Pfam" id="PF02033">
    <property type="entry name" value="RBFA"/>
    <property type="match status" value="1"/>
</dbReference>
<dbReference type="SUPFAM" id="SSF89919">
    <property type="entry name" value="Ribosome-binding factor A, RbfA"/>
    <property type="match status" value="1"/>
</dbReference>
<dbReference type="PROSITE" id="PS01319">
    <property type="entry name" value="RBFA"/>
    <property type="match status" value="1"/>
</dbReference>
<keyword id="KW-0963">Cytoplasm</keyword>
<keyword id="KW-0690">Ribosome biogenesis</keyword>
<gene>
    <name evidence="1" type="primary">rbfA</name>
    <name type="ordered locus">Shewmr4_1027</name>
</gene>
<sequence>MAKEFSRTRRIGQQLQQELAVVLQRDMKDPRIGFVTVNDVDVSRDLSYAKVFVTFFEEDKEVVQEKLNALIAAAPYIRTLVAGRMKLRVMPEIRFVYDSSLVEGMRMSNLVSQVINSDKAKQQQFGSADDVTENDIDEADDTEGKA</sequence>
<protein>
    <recommendedName>
        <fullName evidence="1">Ribosome-binding factor A</fullName>
    </recommendedName>
</protein>
<comment type="function">
    <text evidence="1">One of several proteins that assist in the late maturation steps of the functional core of the 30S ribosomal subunit. Associates with free 30S ribosomal subunits (but not with 30S subunits that are part of 70S ribosomes or polysomes). Required for efficient processing of 16S rRNA. May interact with the 5'-terminal helix region of 16S rRNA.</text>
</comment>
<comment type="subunit">
    <text evidence="1">Monomer. Binds 30S ribosomal subunits, but not 50S ribosomal subunits or 70S ribosomes.</text>
</comment>
<comment type="subcellular location">
    <subcellularLocation>
        <location evidence="1">Cytoplasm</location>
    </subcellularLocation>
</comment>
<comment type="similarity">
    <text evidence="1">Belongs to the RbfA family.</text>
</comment>
<organism>
    <name type="scientific">Shewanella sp. (strain MR-4)</name>
    <dbReference type="NCBI Taxonomy" id="60480"/>
    <lineage>
        <taxon>Bacteria</taxon>
        <taxon>Pseudomonadati</taxon>
        <taxon>Pseudomonadota</taxon>
        <taxon>Gammaproteobacteria</taxon>
        <taxon>Alteromonadales</taxon>
        <taxon>Shewanellaceae</taxon>
        <taxon>Shewanella</taxon>
    </lineage>
</organism>
<proteinExistence type="inferred from homology"/>